<reference key="1">
    <citation type="journal article" date="2003" name="J. Bacteriol.">
        <title>Complete genome sequence of the oral pathogenic bacterium Porphyromonas gingivalis strain W83.</title>
        <authorList>
            <person name="Nelson K.E."/>
            <person name="Fleischmann R.D."/>
            <person name="DeBoy R.T."/>
            <person name="Paulsen I.T."/>
            <person name="Fouts D.E."/>
            <person name="Eisen J.A."/>
            <person name="Daugherty S.C."/>
            <person name="Dodson R.J."/>
            <person name="Durkin A.S."/>
            <person name="Gwinn M.L."/>
            <person name="Haft D.H."/>
            <person name="Kolonay J.F."/>
            <person name="Nelson W.C."/>
            <person name="Mason T.M."/>
            <person name="Tallon L."/>
            <person name="Gray J."/>
            <person name="Granger D."/>
            <person name="Tettelin H."/>
            <person name="Dong H."/>
            <person name="Galvin J.L."/>
            <person name="Duncan M.J."/>
            <person name="Dewhirst F.E."/>
            <person name="Fraser C.M."/>
        </authorList>
    </citation>
    <scope>NUCLEOTIDE SEQUENCE [LARGE SCALE GENOMIC DNA]</scope>
    <source>
        <strain>ATCC BAA-308 / W83</strain>
    </source>
</reference>
<proteinExistence type="inferred from homology"/>
<evidence type="ECO:0000250" key="1"/>
<evidence type="ECO:0000255" key="2">
    <source>
        <dbReference type="HAMAP-Rule" id="MF_01057"/>
    </source>
</evidence>
<keyword id="KW-0489">Methyltransferase</keyword>
<keyword id="KW-1185">Reference proteome</keyword>
<keyword id="KW-0949">S-adenosyl-L-methionine</keyword>
<keyword id="KW-0808">Transferase</keyword>
<keyword id="KW-0819">tRNA processing</keyword>
<sequence length="244" mass="28215">METFPHVFQYPFAVLQQQESGFPLRGRWHTDFFHNDHPIVLELGCGRGEYTVGLGKRFPEKNFIGIDIKGARMWAGAKESLQEGMSNVAFLRTDIELLDRFFAEGEVAEIWITFPDPQMKKVGKRLTGTRFLSLYDKVLERGGRIHLKTDSPFLYTYTKALVELNGLPVHEITDDLYGKGCVENEILGIRTYYEQQWLERGLTIKYISFGLGEPDCEYREPDIEIEPDSYRSYNRSRRSQAVPS</sequence>
<name>TRMB_PORGI</name>
<accession>Q7MVS9</accession>
<protein>
    <recommendedName>
        <fullName evidence="2">tRNA (guanine-N(7)-)-methyltransferase</fullName>
        <ecNumber evidence="2">2.1.1.33</ecNumber>
    </recommendedName>
    <alternativeName>
        <fullName evidence="2">tRNA (guanine(46)-N(7))-methyltransferase</fullName>
    </alternativeName>
    <alternativeName>
        <fullName evidence="2">tRNA(m7G46)-methyltransferase</fullName>
    </alternativeName>
</protein>
<organism>
    <name type="scientific">Porphyromonas gingivalis (strain ATCC BAA-308 / W83)</name>
    <dbReference type="NCBI Taxonomy" id="242619"/>
    <lineage>
        <taxon>Bacteria</taxon>
        <taxon>Pseudomonadati</taxon>
        <taxon>Bacteroidota</taxon>
        <taxon>Bacteroidia</taxon>
        <taxon>Bacteroidales</taxon>
        <taxon>Porphyromonadaceae</taxon>
        <taxon>Porphyromonas</taxon>
    </lineage>
</organism>
<comment type="function">
    <text evidence="2">Catalyzes the formation of N(7)-methylguanine at position 46 (m7G46) in tRNA.</text>
</comment>
<comment type="catalytic activity">
    <reaction evidence="2">
        <text>guanosine(46) in tRNA + S-adenosyl-L-methionine = N(7)-methylguanosine(46) in tRNA + S-adenosyl-L-homocysteine</text>
        <dbReference type="Rhea" id="RHEA:42708"/>
        <dbReference type="Rhea" id="RHEA-COMP:10188"/>
        <dbReference type="Rhea" id="RHEA-COMP:10189"/>
        <dbReference type="ChEBI" id="CHEBI:57856"/>
        <dbReference type="ChEBI" id="CHEBI:59789"/>
        <dbReference type="ChEBI" id="CHEBI:74269"/>
        <dbReference type="ChEBI" id="CHEBI:74480"/>
        <dbReference type="EC" id="2.1.1.33"/>
    </reaction>
</comment>
<comment type="pathway">
    <text evidence="2">tRNA modification; N(7)-methylguanine-tRNA biosynthesis.</text>
</comment>
<comment type="similarity">
    <text evidence="2">Belongs to the class I-like SAM-binding methyltransferase superfamily. TrmB family.</text>
</comment>
<feature type="chain" id="PRO_0000171371" description="tRNA (guanine-N(7)-)-methyltransferase">
    <location>
        <begin position="1"/>
        <end position="244"/>
    </location>
</feature>
<feature type="active site" evidence="1">
    <location>
        <position position="116"/>
    </location>
</feature>
<feature type="binding site" evidence="2">
    <location>
        <position position="42"/>
    </location>
    <ligand>
        <name>S-adenosyl-L-methionine</name>
        <dbReference type="ChEBI" id="CHEBI:59789"/>
    </ligand>
</feature>
<feature type="binding site" evidence="2">
    <location>
        <position position="67"/>
    </location>
    <ligand>
        <name>S-adenosyl-L-methionine</name>
        <dbReference type="ChEBI" id="CHEBI:59789"/>
    </ligand>
</feature>
<feature type="binding site" evidence="2">
    <location>
        <position position="94"/>
    </location>
    <ligand>
        <name>S-adenosyl-L-methionine</name>
        <dbReference type="ChEBI" id="CHEBI:59789"/>
    </ligand>
</feature>
<feature type="binding site" evidence="2">
    <location>
        <position position="116"/>
    </location>
    <ligand>
        <name>S-adenosyl-L-methionine</name>
        <dbReference type="ChEBI" id="CHEBI:59789"/>
    </ligand>
</feature>
<feature type="binding site" evidence="2">
    <location>
        <position position="120"/>
    </location>
    <ligand>
        <name>substrate</name>
    </ligand>
</feature>
<feature type="binding site" evidence="2">
    <location>
        <position position="150"/>
    </location>
    <ligand>
        <name>substrate</name>
    </ligand>
</feature>
<feature type="binding site" evidence="2">
    <location>
        <begin position="191"/>
        <end position="194"/>
    </location>
    <ligand>
        <name>substrate</name>
    </ligand>
</feature>
<gene>
    <name evidence="2" type="primary">trmB</name>
    <name type="ordered locus">PG_0960</name>
</gene>
<dbReference type="EC" id="2.1.1.33" evidence="2"/>
<dbReference type="EMBL" id="AE015924">
    <property type="protein sequence ID" value="AAQ66090.1"/>
    <property type="molecule type" value="Genomic_DNA"/>
</dbReference>
<dbReference type="SMR" id="Q7MVS9"/>
<dbReference type="STRING" id="242619.PG_0960"/>
<dbReference type="EnsemblBacteria" id="AAQ66090">
    <property type="protein sequence ID" value="AAQ66090"/>
    <property type="gene ID" value="PG_0960"/>
</dbReference>
<dbReference type="KEGG" id="pgi:PG_0960"/>
<dbReference type="eggNOG" id="COG0220">
    <property type="taxonomic scope" value="Bacteria"/>
</dbReference>
<dbReference type="HOGENOM" id="CLU_050910_2_2_10"/>
<dbReference type="UniPathway" id="UPA00989"/>
<dbReference type="Proteomes" id="UP000000588">
    <property type="component" value="Chromosome"/>
</dbReference>
<dbReference type="GO" id="GO:0043527">
    <property type="term" value="C:tRNA methyltransferase complex"/>
    <property type="evidence" value="ECO:0007669"/>
    <property type="project" value="TreeGrafter"/>
</dbReference>
<dbReference type="GO" id="GO:0008176">
    <property type="term" value="F:tRNA (guanine(46)-N7)-methyltransferase activity"/>
    <property type="evidence" value="ECO:0007669"/>
    <property type="project" value="UniProtKB-UniRule"/>
</dbReference>
<dbReference type="CDD" id="cd02440">
    <property type="entry name" value="AdoMet_MTases"/>
    <property type="match status" value="1"/>
</dbReference>
<dbReference type="Gene3D" id="3.40.50.150">
    <property type="entry name" value="Vaccinia Virus protein VP39"/>
    <property type="match status" value="1"/>
</dbReference>
<dbReference type="HAMAP" id="MF_01057">
    <property type="entry name" value="tRNA_methyltr_TrmB"/>
    <property type="match status" value="1"/>
</dbReference>
<dbReference type="InterPro" id="IPR029063">
    <property type="entry name" value="SAM-dependent_MTases_sf"/>
</dbReference>
<dbReference type="InterPro" id="IPR003358">
    <property type="entry name" value="tRNA_(Gua-N-7)_MeTrfase_Trmb"/>
</dbReference>
<dbReference type="InterPro" id="IPR055361">
    <property type="entry name" value="tRNA_methyltr_TrmB_bact"/>
</dbReference>
<dbReference type="NCBIfam" id="NF001080">
    <property type="entry name" value="PRK00121.2-2"/>
    <property type="match status" value="1"/>
</dbReference>
<dbReference type="PANTHER" id="PTHR23417">
    <property type="entry name" value="3-DEOXY-D-MANNO-OCTULOSONIC-ACID TRANSFERASE/TRNA GUANINE-N 7 - -METHYLTRANSFERASE"/>
    <property type="match status" value="1"/>
</dbReference>
<dbReference type="PANTHER" id="PTHR23417:SF14">
    <property type="entry name" value="PENTACOTRIPEPTIDE-REPEAT REGION OF PRORP DOMAIN-CONTAINING PROTEIN"/>
    <property type="match status" value="1"/>
</dbReference>
<dbReference type="Pfam" id="PF02390">
    <property type="entry name" value="Methyltransf_4"/>
    <property type="match status" value="1"/>
</dbReference>
<dbReference type="SUPFAM" id="SSF53335">
    <property type="entry name" value="S-adenosyl-L-methionine-dependent methyltransferases"/>
    <property type="match status" value="1"/>
</dbReference>
<dbReference type="PROSITE" id="PS51625">
    <property type="entry name" value="SAM_MT_TRMB"/>
    <property type="match status" value="1"/>
</dbReference>